<reference key="1">
    <citation type="journal article" date="2004" name="Nat. Genet.">
        <title>Complete sequencing and characterization of 21,243 full-length human cDNAs.</title>
        <authorList>
            <person name="Ota T."/>
            <person name="Suzuki Y."/>
            <person name="Nishikawa T."/>
            <person name="Otsuki T."/>
            <person name="Sugiyama T."/>
            <person name="Irie R."/>
            <person name="Wakamatsu A."/>
            <person name="Hayashi K."/>
            <person name="Sato H."/>
            <person name="Nagai K."/>
            <person name="Kimura K."/>
            <person name="Makita H."/>
            <person name="Sekine M."/>
            <person name="Obayashi M."/>
            <person name="Nishi T."/>
            <person name="Shibahara T."/>
            <person name="Tanaka T."/>
            <person name="Ishii S."/>
            <person name="Yamamoto J."/>
            <person name="Saito K."/>
            <person name="Kawai Y."/>
            <person name="Isono Y."/>
            <person name="Nakamura Y."/>
            <person name="Nagahari K."/>
            <person name="Murakami K."/>
            <person name="Yasuda T."/>
            <person name="Iwayanagi T."/>
            <person name="Wagatsuma M."/>
            <person name="Shiratori A."/>
            <person name="Sudo H."/>
            <person name="Hosoiri T."/>
            <person name="Kaku Y."/>
            <person name="Kodaira H."/>
            <person name="Kondo H."/>
            <person name="Sugawara M."/>
            <person name="Takahashi M."/>
            <person name="Kanda K."/>
            <person name="Yokoi T."/>
            <person name="Furuya T."/>
            <person name="Kikkawa E."/>
            <person name="Omura Y."/>
            <person name="Abe K."/>
            <person name="Kamihara K."/>
            <person name="Katsuta N."/>
            <person name="Sato K."/>
            <person name="Tanikawa M."/>
            <person name="Yamazaki M."/>
            <person name="Ninomiya K."/>
            <person name="Ishibashi T."/>
            <person name="Yamashita H."/>
            <person name="Murakawa K."/>
            <person name="Fujimori K."/>
            <person name="Tanai H."/>
            <person name="Kimata M."/>
            <person name="Watanabe M."/>
            <person name="Hiraoka S."/>
            <person name="Chiba Y."/>
            <person name="Ishida S."/>
            <person name="Ono Y."/>
            <person name="Takiguchi S."/>
            <person name="Watanabe S."/>
            <person name="Yosida M."/>
            <person name="Hotuta T."/>
            <person name="Kusano J."/>
            <person name="Kanehori K."/>
            <person name="Takahashi-Fujii A."/>
            <person name="Hara H."/>
            <person name="Tanase T.-O."/>
            <person name="Nomura Y."/>
            <person name="Togiya S."/>
            <person name="Komai F."/>
            <person name="Hara R."/>
            <person name="Takeuchi K."/>
            <person name="Arita M."/>
            <person name="Imose N."/>
            <person name="Musashino K."/>
            <person name="Yuuki H."/>
            <person name="Oshima A."/>
            <person name="Sasaki N."/>
            <person name="Aotsuka S."/>
            <person name="Yoshikawa Y."/>
            <person name="Matsunawa H."/>
            <person name="Ichihara T."/>
            <person name="Shiohata N."/>
            <person name="Sano S."/>
            <person name="Moriya S."/>
            <person name="Momiyama H."/>
            <person name="Satoh N."/>
            <person name="Takami S."/>
            <person name="Terashima Y."/>
            <person name="Suzuki O."/>
            <person name="Nakagawa S."/>
            <person name="Senoh A."/>
            <person name="Mizoguchi H."/>
            <person name="Goto Y."/>
            <person name="Shimizu F."/>
            <person name="Wakebe H."/>
            <person name="Hishigaki H."/>
            <person name="Watanabe T."/>
            <person name="Sugiyama A."/>
            <person name="Takemoto M."/>
            <person name="Kawakami B."/>
            <person name="Yamazaki M."/>
            <person name="Watanabe K."/>
            <person name="Kumagai A."/>
            <person name="Itakura S."/>
            <person name="Fukuzumi Y."/>
            <person name="Fujimori Y."/>
            <person name="Komiyama M."/>
            <person name="Tashiro H."/>
            <person name="Tanigami A."/>
            <person name="Fujiwara T."/>
            <person name="Ono T."/>
            <person name="Yamada K."/>
            <person name="Fujii Y."/>
            <person name="Ozaki K."/>
            <person name="Hirao M."/>
            <person name="Ohmori Y."/>
            <person name="Kawabata A."/>
            <person name="Hikiji T."/>
            <person name="Kobatake N."/>
            <person name="Inagaki H."/>
            <person name="Ikema Y."/>
            <person name="Okamoto S."/>
            <person name="Okitani R."/>
            <person name="Kawakami T."/>
            <person name="Noguchi S."/>
            <person name="Itoh T."/>
            <person name="Shigeta K."/>
            <person name="Senba T."/>
            <person name="Matsumura K."/>
            <person name="Nakajima Y."/>
            <person name="Mizuno T."/>
            <person name="Morinaga M."/>
            <person name="Sasaki M."/>
            <person name="Togashi T."/>
            <person name="Oyama M."/>
            <person name="Hata H."/>
            <person name="Watanabe M."/>
            <person name="Komatsu T."/>
            <person name="Mizushima-Sugano J."/>
            <person name="Satoh T."/>
            <person name="Shirai Y."/>
            <person name="Takahashi Y."/>
            <person name="Nakagawa K."/>
            <person name="Okumura K."/>
            <person name="Nagase T."/>
            <person name="Nomura N."/>
            <person name="Kikuchi H."/>
            <person name="Masuho Y."/>
            <person name="Yamashita R."/>
            <person name="Nakai K."/>
            <person name="Yada T."/>
            <person name="Nakamura Y."/>
            <person name="Ohara O."/>
            <person name="Isogai T."/>
            <person name="Sugano S."/>
        </authorList>
    </citation>
    <scope>NUCLEOTIDE SEQUENCE [LARGE SCALE MRNA] (ISOFORM 2)</scope>
    <source>
        <tissue>Embryo</tissue>
    </source>
</reference>
<reference key="2">
    <citation type="journal article" date="2006" name="Nature">
        <title>The DNA sequence, annotation and analysis of human chromosome 3.</title>
        <authorList>
            <person name="Muzny D.M."/>
            <person name="Scherer S.E."/>
            <person name="Kaul R."/>
            <person name="Wang J."/>
            <person name="Yu J."/>
            <person name="Sudbrak R."/>
            <person name="Buhay C.J."/>
            <person name="Chen R."/>
            <person name="Cree A."/>
            <person name="Ding Y."/>
            <person name="Dugan-Rocha S."/>
            <person name="Gill R."/>
            <person name="Gunaratne P."/>
            <person name="Harris R.A."/>
            <person name="Hawes A.C."/>
            <person name="Hernandez J."/>
            <person name="Hodgson A.V."/>
            <person name="Hume J."/>
            <person name="Jackson A."/>
            <person name="Khan Z.M."/>
            <person name="Kovar-Smith C."/>
            <person name="Lewis L.R."/>
            <person name="Lozado R.J."/>
            <person name="Metzker M.L."/>
            <person name="Milosavljevic A."/>
            <person name="Miner G.R."/>
            <person name="Morgan M.B."/>
            <person name="Nazareth L.V."/>
            <person name="Scott G."/>
            <person name="Sodergren E."/>
            <person name="Song X.-Z."/>
            <person name="Steffen D."/>
            <person name="Wei S."/>
            <person name="Wheeler D.A."/>
            <person name="Wright M.W."/>
            <person name="Worley K.C."/>
            <person name="Yuan Y."/>
            <person name="Zhang Z."/>
            <person name="Adams C.Q."/>
            <person name="Ansari-Lari M.A."/>
            <person name="Ayele M."/>
            <person name="Brown M.J."/>
            <person name="Chen G."/>
            <person name="Chen Z."/>
            <person name="Clendenning J."/>
            <person name="Clerc-Blankenburg K.P."/>
            <person name="Chen R."/>
            <person name="Chen Z."/>
            <person name="Davis C."/>
            <person name="Delgado O."/>
            <person name="Dinh H.H."/>
            <person name="Dong W."/>
            <person name="Draper H."/>
            <person name="Ernst S."/>
            <person name="Fu G."/>
            <person name="Gonzalez-Garay M.L."/>
            <person name="Garcia D.K."/>
            <person name="Gillett W."/>
            <person name="Gu J."/>
            <person name="Hao B."/>
            <person name="Haugen E."/>
            <person name="Havlak P."/>
            <person name="He X."/>
            <person name="Hennig S."/>
            <person name="Hu S."/>
            <person name="Huang W."/>
            <person name="Jackson L.R."/>
            <person name="Jacob L.S."/>
            <person name="Kelly S.H."/>
            <person name="Kube M."/>
            <person name="Levy R."/>
            <person name="Li Z."/>
            <person name="Liu B."/>
            <person name="Liu J."/>
            <person name="Liu W."/>
            <person name="Lu J."/>
            <person name="Maheshwari M."/>
            <person name="Nguyen B.-V."/>
            <person name="Okwuonu G.O."/>
            <person name="Palmeiri A."/>
            <person name="Pasternak S."/>
            <person name="Perez L.M."/>
            <person name="Phelps K.A."/>
            <person name="Plopper F.J."/>
            <person name="Qiang B."/>
            <person name="Raymond C."/>
            <person name="Rodriguez R."/>
            <person name="Saenphimmachak C."/>
            <person name="Santibanez J."/>
            <person name="Shen H."/>
            <person name="Shen Y."/>
            <person name="Subramanian S."/>
            <person name="Tabor P.E."/>
            <person name="Verduzco D."/>
            <person name="Waldron L."/>
            <person name="Wang J."/>
            <person name="Wang J."/>
            <person name="Wang Q."/>
            <person name="Williams G.A."/>
            <person name="Wong G.K.-S."/>
            <person name="Yao Z."/>
            <person name="Zhang J."/>
            <person name="Zhang X."/>
            <person name="Zhao G."/>
            <person name="Zhou J."/>
            <person name="Zhou Y."/>
            <person name="Nelson D."/>
            <person name="Lehrach H."/>
            <person name="Reinhardt R."/>
            <person name="Naylor S.L."/>
            <person name="Yang H."/>
            <person name="Olson M."/>
            <person name="Weinstock G."/>
            <person name="Gibbs R.A."/>
        </authorList>
    </citation>
    <scope>NUCLEOTIDE SEQUENCE [LARGE SCALE GENOMIC DNA]</scope>
</reference>
<reference key="3">
    <citation type="journal article" date="2004" name="Genome Res.">
        <title>The status, quality, and expansion of the NIH full-length cDNA project: the Mammalian Gene Collection (MGC).</title>
        <authorList>
            <consortium name="The MGC Project Team"/>
        </authorList>
    </citation>
    <scope>NUCLEOTIDE SEQUENCE [LARGE SCALE MRNA] OF 113-276 AND 431-598 (ISOFORM 1)</scope>
    <source>
        <tissue>Brain</tissue>
        <tissue>Ovary</tissue>
    </source>
</reference>
<gene>
    <name type="primary">EFCC1</name>
    <name type="synonym">C3orf73</name>
    <name type="synonym">CCDC48</name>
</gene>
<proteinExistence type="evidence at protein level"/>
<keyword id="KW-0025">Alternative splicing</keyword>
<keyword id="KW-0175">Coiled coil</keyword>
<keyword id="KW-1267">Proteomics identification</keyword>
<keyword id="KW-1185">Reference proteome</keyword>
<organism>
    <name type="scientific">Homo sapiens</name>
    <name type="common">Human</name>
    <dbReference type="NCBI Taxonomy" id="9606"/>
    <lineage>
        <taxon>Eukaryota</taxon>
        <taxon>Metazoa</taxon>
        <taxon>Chordata</taxon>
        <taxon>Craniata</taxon>
        <taxon>Vertebrata</taxon>
        <taxon>Euteleostomi</taxon>
        <taxon>Mammalia</taxon>
        <taxon>Eutheria</taxon>
        <taxon>Euarchontoglires</taxon>
        <taxon>Primates</taxon>
        <taxon>Haplorrhini</taxon>
        <taxon>Catarrhini</taxon>
        <taxon>Hominidae</taxon>
        <taxon>Homo</taxon>
    </lineage>
</organism>
<evidence type="ECO:0000255" key="1"/>
<evidence type="ECO:0000255" key="2">
    <source>
        <dbReference type="PROSITE-ProRule" id="PRU00448"/>
    </source>
</evidence>
<evidence type="ECO:0000256" key="3">
    <source>
        <dbReference type="SAM" id="MobiDB-lite"/>
    </source>
</evidence>
<evidence type="ECO:0000303" key="4">
    <source>
    </source>
</evidence>
<evidence type="ECO:0000305" key="5"/>
<comment type="alternative products">
    <event type="alternative splicing"/>
    <isoform>
        <id>Q9HA90-1</id>
        <name>1</name>
        <sequence type="displayed"/>
    </isoform>
    <isoform>
        <id>Q9HA90-2</id>
        <name>2</name>
        <sequence type="described" ref="VSP_039449"/>
    </isoform>
</comment>
<comment type="caution">
    <text evidence="5">It is uncertain whether Met-1 or Met-12 is the initiator.</text>
</comment>
<comment type="sequence caution" evidence="5">
    <conflict type="erroneous initiation">
        <sequence resource="EMBL-CDS" id="AAH93800"/>
    </conflict>
    <text>Truncated N-terminus.</text>
</comment>
<comment type="sequence caution" evidence="5">
    <conflict type="erroneous initiation">
        <sequence resource="EMBL-CDS" id="AAI12196"/>
    </conflict>
    <text>Truncated N-terminus.</text>
</comment>
<protein>
    <recommendedName>
        <fullName>EF-hand and coiled-coil domain-containing protein 1</fullName>
    </recommendedName>
    <alternativeName>
        <fullName>Coiled-coil domain-containing protein 48</fullName>
    </alternativeName>
</protein>
<dbReference type="EMBL" id="AK022119">
    <property type="protein sequence ID" value="BAB13964.1"/>
    <property type="molecule type" value="mRNA"/>
</dbReference>
<dbReference type="EMBL" id="AC112484">
    <property type="status" value="NOT_ANNOTATED_CDS"/>
    <property type="molecule type" value="Genomic_DNA"/>
</dbReference>
<dbReference type="EMBL" id="BC093800">
    <property type="protein sequence ID" value="AAH93800.1"/>
    <property type="status" value="ALT_INIT"/>
    <property type="molecule type" value="mRNA"/>
</dbReference>
<dbReference type="EMBL" id="BC112195">
    <property type="protein sequence ID" value="AAI12196.1"/>
    <property type="status" value="ALT_INIT"/>
    <property type="molecule type" value="mRNA"/>
</dbReference>
<dbReference type="EMBL" id="BF058142">
    <property type="status" value="NOT_ANNOTATED_CDS"/>
    <property type="molecule type" value="mRNA"/>
</dbReference>
<dbReference type="CCDS" id="CCDS3054.2">
    <molecule id="Q9HA90-1"/>
</dbReference>
<dbReference type="RefSeq" id="NP_079044.2">
    <molecule id="Q9HA90-1"/>
    <property type="nucleotide sequence ID" value="NM_024768.3"/>
</dbReference>
<dbReference type="SMR" id="Q9HA90"/>
<dbReference type="BioGRID" id="122918">
    <property type="interactions" value="4"/>
</dbReference>
<dbReference type="FunCoup" id="Q9HA90">
    <property type="interactions" value="5"/>
</dbReference>
<dbReference type="IntAct" id="Q9HA90">
    <property type="interactions" value="1"/>
</dbReference>
<dbReference type="STRING" id="9606.ENSP00000414597"/>
<dbReference type="GlyGen" id="Q9HA90">
    <property type="glycosylation" value="1 site"/>
</dbReference>
<dbReference type="iPTMnet" id="Q9HA90"/>
<dbReference type="PhosphoSitePlus" id="Q9HA90"/>
<dbReference type="BioMuta" id="EFCC1"/>
<dbReference type="DMDM" id="300669629"/>
<dbReference type="jPOST" id="Q9HA90"/>
<dbReference type="MassIVE" id="Q9HA90"/>
<dbReference type="PaxDb" id="9606-ENSP00000414597"/>
<dbReference type="PeptideAtlas" id="Q9HA90"/>
<dbReference type="ProteomicsDB" id="81385">
    <molecule id="Q9HA90-1"/>
</dbReference>
<dbReference type="Antibodypedia" id="55576">
    <property type="antibodies" value="22 antibodies from 8 providers"/>
</dbReference>
<dbReference type="DNASU" id="79825"/>
<dbReference type="Ensembl" id="ENST00000436022.2">
    <molecule id="Q9HA90-1"/>
    <property type="protein sequence ID" value="ENSP00000414597.3"/>
    <property type="gene ID" value="ENSG00000114654.8"/>
</dbReference>
<dbReference type="GeneID" id="79825"/>
<dbReference type="KEGG" id="hsa:79825"/>
<dbReference type="UCSC" id="uc011bkt.2">
    <molecule id="Q9HA90-1"/>
    <property type="organism name" value="human"/>
</dbReference>
<dbReference type="AGR" id="HGNC:25692"/>
<dbReference type="CTD" id="79825"/>
<dbReference type="DisGeNET" id="79825"/>
<dbReference type="GeneCards" id="EFCC1"/>
<dbReference type="HGNC" id="HGNC:25692">
    <property type="gene designation" value="EFCC1"/>
</dbReference>
<dbReference type="HPA" id="ENSG00000114654">
    <property type="expression patterns" value="Tissue enhanced (lung)"/>
</dbReference>
<dbReference type="neXtProt" id="NX_Q9HA90"/>
<dbReference type="OpenTargets" id="ENSG00000114654"/>
<dbReference type="PharmGKB" id="PA142672165"/>
<dbReference type="VEuPathDB" id="HostDB:ENSG00000114654"/>
<dbReference type="eggNOG" id="ENOG502QUT5">
    <property type="taxonomic scope" value="Eukaryota"/>
</dbReference>
<dbReference type="GeneTree" id="ENSGT00950000183014"/>
<dbReference type="HOGENOM" id="CLU_456299_0_0_1"/>
<dbReference type="InParanoid" id="Q9HA90"/>
<dbReference type="OMA" id="RCDDKAF"/>
<dbReference type="OrthoDB" id="10054715at2759"/>
<dbReference type="PAN-GO" id="Q9HA90">
    <property type="GO annotations" value="1 GO annotation based on evolutionary models"/>
</dbReference>
<dbReference type="PhylomeDB" id="Q9HA90"/>
<dbReference type="TreeFam" id="TF330736"/>
<dbReference type="PathwayCommons" id="Q9HA90"/>
<dbReference type="SignaLink" id="Q9HA90"/>
<dbReference type="BioGRID-ORCS" id="79825">
    <property type="hits" value="21 hits in 1137 CRISPR screens"/>
</dbReference>
<dbReference type="GenomeRNAi" id="79825"/>
<dbReference type="Pharos" id="Q9HA90">
    <property type="development level" value="Tdark"/>
</dbReference>
<dbReference type="PRO" id="PR:Q9HA90"/>
<dbReference type="Proteomes" id="UP000005640">
    <property type="component" value="Chromosome 3"/>
</dbReference>
<dbReference type="RNAct" id="Q9HA90">
    <property type="molecule type" value="protein"/>
</dbReference>
<dbReference type="Bgee" id="ENSG00000114654">
    <property type="expression patterns" value="Expressed in upper lobe of left lung and 99 other cell types or tissues"/>
</dbReference>
<dbReference type="GO" id="GO:0005509">
    <property type="term" value="F:calcium ion binding"/>
    <property type="evidence" value="ECO:0007669"/>
    <property type="project" value="InterPro"/>
</dbReference>
<dbReference type="InterPro" id="IPR031601">
    <property type="entry name" value="CCD48"/>
</dbReference>
<dbReference type="InterPro" id="IPR002048">
    <property type="entry name" value="EF_hand_dom"/>
</dbReference>
<dbReference type="Pfam" id="PF15799">
    <property type="entry name" value="CCD48"/>
    <property type="match status" value="1"/>
</dbReference>
<dbReference type="PROSITE" id="PS50222">
    <property type="entry name" value="EF_HAND_2"/>
    <property type="match status" value="1"/>
</dbReference>
<sequence length="598" mass="65701">MEPVSTGAEAGMEGAGGDPYRRPARRTQWLLSALAHHYGLDRGVENEIVVLATGLDQYLQEVFHHLDCRGAGRLPRADFRALCAVLGLRAEGATTAGQAAGDGNSRDVTPGDAAAELATDGDSDTDEEARLALRAEPPELTFRQFHARLCGYFGTRAGPRLPRGALSEHIETQIRLRRPRRRRRPPCAPGPDSGPDCERVARLEEENSSLRELVEDLRAALQSSDARCLALQVGLWKSQASTHEMGHGGPEAAVRELRQAQGALAAAEARAGRLRRGQAEVRRRAEEARQVVLRSLHRVRELEALAQQVPGLQRWVRRLEAELQRYRSEDSQLPTPQLANPEPGDKSNEPEDAGTRDPDPTPEGAWQSDSSSGSRALDEVDEQLFRSVEGQAASDEEEVEEERWQEEKKTPAAEAKTLLARLSSCRGRCDDQTAEKLMTYFGHFGGANHAHTLGELEACIAMLVEQLRTQGCGGRTLGTSEEEAELQQKVEENEHLRLELQMVETERVRLSLLEEKLVDVLQLLQRLRDLNISKRALGKILLSTLDAFRDPTHEGRPSPAAILDALHQALAACQLLRRQPSAPASAAAALTNPLLVSC</sequence>
<name>EFCC1_HUMAN</name>
<feature type="chain" id="PRO_0000234510" description="EF-hand and coiled-coil domain-containing protein 1">
    <location>
        <begin position="1"/>
        <end position="598"/>
    </location>
</feature>
<feature type="domain" description="EF-hand" evidence="2">
    <location>
        <begin position="54"/>
        <end position="89"/>
    </location>
</feature>
<feature type="region of interest" description="Disordered" evidence="3">
    <location>
        <begin position="1"/>
        <end position="22"/>
    </location>
</feature>
<feature type="region of interest" description="Disordered" evidence="3">
    <location>
        <begin position="96"/>
        <end position="127"/>
    </location>
</feature>
<feature type="region of interest" description="Disordered" evidence="3">
    <location>
        <begin position="175"/>
        <end position="198"/>
    </location>
</feature>
<feature type="region of interest" description="Disordered" evidence="3">
    <location>
        <begin position="326"/>
        <end position="411"/>
    </location>
</feature>
<feature type="coiled-coil region" evidence="1">
    <location>
        <begin position="196"/>
        <end position="303"/>
    </location>
</feature>
<feature type="coiled-coil region" evidence="1">
    <location>
        <begin position="479"/>
        <end position="533"/>
    </location>
</feature>
<feature type="compositionally biased region" description="Basic residues" evidence="3">
    <location>
        <begin position="175"/>
        <end position="185"/>
    </location>
</feature>
<feature type="compositionally biased region" description="Basic and acidic residues" evidence="3">
    <location>
        <begin position="343"/>
        <end position="359"/>
    </location>
</feature>
<feature type="compositionally biased region" description="Acidic residues" evidence="3">
    <location>
        <begin position="394"/>
        <end position="404"/>
    </location>
</feature>
<feature type="splice variant" id="VSP_039449" description="In isoform 2." evidence="4">
    <location>
        <begin position="1"/>
        <end position="437"/>
    </location>
</feature>
<feature type="sequence variant" id="VAR_050753" description="In dbSNP:rs3732430.">
    <original>R</original>
    <variation>Q</variation>
    <location>
        <position position="528"/>
    </location>
</feature>
<accession>Q9HA90</accession>
<accession>A8MYE2</accession>